<dbReference type="EMBL" id="CP001407">
    <property type="protein sequence ID" value="ACO29675.1"/>
    <property type="molecule type" value="Genomic_DNA"/>
</dbReference>
<dbReference type="RefSeq" id="WP_001085872.1">
    <property type="nucleotide sequence ID" value="NZ_CP009318.1"/>
</dbReference>
<dbReference type="SMR" id="C1ET26"/>
<dbReference type="GeneID" id="93010956"/>
<dbReference type="KEGG" id="bcx:BCA_0125"/>
<dbReference type="PATRIC" id="fig|572264.18.peg.161"/>
<dbReference type="Proteomes" id="UP000002210">
    <property type="component" value="Chromosome"/>
</dbReference>
<dbReference type="GO" id="GO:0022625">
    <property type="term" value="C:cytosolic large ribosomal subunit"/>
    <property type="evidence" value="ECO:0007669"/>
    <property type="project" value="TreeGrafter"/>
</dbReference>
<dbReference type="GO" id="GO:0070180">
    <property type="term" value="F:large ribosomal subunit rRNA binding"/>
    <property type="evidence" value="ECO:0007669"/>
    <property type="project" value="UniProtKB-UniRule"/>
</dbReference>
<dbReference type="GO" id="GO:0003735">
    <property type="term" value="F:structural constituent of ribosome"/>
    <property type="evidence" value="ECO:0007669"/>
    <property type="project" value="InterPro"/>
</dbReference>
<dbReference type="GO" id="GO:0006412">
    <property type="term" value="P:translation"/>
    <property type="evidence" value="ECO:0007669"/>
    <property type="project" value="UniProtKB-UniRule"/>
</dbReference>
<dbReference type="CDD" id="cd00349">
    <property type="entry name" value="Ribosomal_L11"/>
    <property type="match status" value="1"/>
</dbReference>
<dbReference type="FunFam" id="1.10.10.250:FF:000001">
    <property type="entry name" value="50S ribosomal protein L11"/>
    <property type="match status" value="1"/>
</dbReference>
<dbReference type="FunFam" id="3.30.1550.10:FF:000001">
    <property type="entry name" value="50S ribosomal protein L11"/>
    <property type="match status" value="1"/>
</dbReference>
<dbReference type="Gene3D" id="1.10.10.250">
    <property type="entry name" value="Ribosomal protein L11, C-terminal domain"/>
    <property type="match status" value="1"/>
</dbReference>
<dbReference type="Gene3D" id="3.30.1550.10">
    <property type="entry name" value="Ribosomal protein L11/L12, N-terminal domain"/>
    <property type="match status" value="1"/>
</dbReference>
<dbReference type="HAMAP" id="MF_00736">
    <property type="entry name" value="Ribosomal_uL11"/>
    <property type="match status" value="1"/>
</dbReference>
<dbReference type="InterPro" id="IPR000911">
    <property type="entry name" value="Ribosomal_uL11"/>
</dbReference>
<dbReference type="InterPro" id="IPR006519">
    <property type="entry name" value="Ribosomal_uL11_bac-typ"/>
</dbReference>
<dbReference type="InterPro" id="IPR020783">
    <property type="entry name" value="Ribosomal_uL11_C"/>
</dbReference>
<dbReference type="InterPro" id="IPR036769">
    <property type="entry name" value="Ribosomal_uL11_C_sf"/>
</dbReference>
<dbReference type="InterPro" id="IPR020785">
    <property type="entry name" value="Ribosomal_uL11_CS"/>
</dbReference>
<dbReference type="InterPro" id="IPR020784">
    <property type="entry name" value="Ribosomal_uL11_N"/>
</dbReference>
<dbReference type="InterPro" id="IPR036796">
    <property type="entry name" value="Ribosomal_uL11_N_sf"/>
</dbReference>
<dbReference type="NCBIfam" id="TIGR01632">
    <property type="entry name" value="L11_bact"/>
    <property type="match status" value="1"/>
</dbReference>
<dbReference type="PANTHER" id="PTHR11661">
    <property type="entry name" value="60S RIBOSOMAL PROTEIN L12"/>
    <property type="match status" value="1"/>
</dbReference>
<dbReference type="PANTHER" id="PTHR11661:SF1">
    <property type="entry name" value="LARGE RIBOSOMAL SUBUNIT PROTEIN UL11M"/>
    <property type="match status" value="1"/>
</dbReference>
<dbReference type="Pfam" id="PF00298">
    <property type="entry name" value="Ribosomal_L11"/>
    <property type="match status" value="1"/>
</dbReference>
<dbReference type="Pfam" id="PF03946">
    <property type="entry name" value="Ribosomal_L11_N"/>
    <property type="match status" value="1"/>
</dbReference>
<dbReference type="SMART" id="SM00649">
    <property type="entry name" value="RL11"/>
    <property type="match status" value="1"/>
</dbReference>
<dbReference type="SUPFAM" id="SSF54747">
    <property type="entry name" value="Ribosomal L11/L12e N-terminal domain"/>
    <property type="match status" value="1"/>
</dbReference>
<dbReference type="SUPFAM" id="SSF46906">
    <property type="entry name" value="Ribosomal protein L11, C-terminal domain"/>
    <property type="match status" value="1"/>
</dbReference>
<dbReference type="PROSITE" id="PS00359">
    <property type="entry name" value="RIBOSOMAL_L11"/>
    <property type="match status" value="1"/>
</dbReference>
<comment type="function">
    <text evidence="1">Forms part of the ribosomal stalk which helps the ribosome interact with GTP-bound translation factors.</text>
</comment>
<comment type="subunit">
    <text evidence="1">Part of the ribosomal stalk of the 50S ribosomal subunit. Interacts with L10 and the large rRNA to form the base of the stalk. L10 forms an elongated spine to which L12 dimers bind in a sequential fashion forming a multimeric L10(L12)X complex.</text>
</comment>
<comment type="PTM">
    <text evidence="1">One or more lysine residues are methylated.</text>
</comment>
<comment type="similarity">
    <text evidence="1">Belongs to the universal ribosomal protein uL11 family.</text>
</comment>
<keyword id="KW-0488">Methylation</keyword>
<keyword id="KW-0687">Ribonucleoprotein</keyword>
<keyword id="KW-0689">Ribosomal protein</keyword>
<keyword id="KW-0694">RNA-binding</keyword>
<keyword id="KW-0699">rRNA-binding</keyword>
<proteinExistence type="inferred from homology"/>
<accession>C1ET26</accession>
<sequence>MAKKVIKMVKLQIPAGKANPAPPVGPALGQAGVNIMGFCKEFNARTADQAGLIIPVEITVFEDRSFTFITKTPPAAVLLKKVAGIESGSGEPNRNKVATVKRDKVREIAETKMPDLNAASVEAAMRMVEGTARSMGIVIED</sequence>
<evidence type="ECO:0000255" key="1">
    <source>
        <dbReference type="HAMAP-Rule" id="MF_00736"/>
    </source>
</evidence>
<evidence type="ECO:0000305" key="2"/>
<name>RL11_BACC3</name>
<organism>
    <name type="scientific">Bacillus cereus (strain 03BB102)</name>
    <dbReference type="NCBI Taxonomy" id="572264"/>
    <lineage>
        <taxon>Bacteria</taxon>
        <taxon>Bacillati</taxon>
        <taxon>Bacillota</taxon>
        <taxon>Bacilli</taxon>
        <taxon>Bacillales</taxon>
        <taxon>Bacillaceae</taxon>
        <taxon>Bacillus</taxon>
        <taxon>Bacillus cereus group</taxon>
    </lineage>
</organism>
<reference key="1">
    <citation type="submission" date="2009-02" db="EMBL/GenBank/DDBJ databases">
        <title>Genome sequence of Bacillus cereus 03BB102.</title>
        <authorList>
            <person name="Dodson R.J."/>
            <person name="Jackson P."/>
            <person name="Munk A.C."/>
            <person name="Brettin T."/>
            <person name="Bruce D."/>
            <person name="Detter C."/>
            <person name="Tapia R."/>
            <person name="Han C."/>
            <person name="Sutton G."/>
            <person name="Sims D."/>
        </authorList>
    </citation>
    <scope>NUCLEOTIDE SEQUENCE [LARGE SCALE GENOMIC DNA]</scope>
    <source>
        <strain>03BB102</strain>
    </source>
</reference>
<feature type="chain" id="PRO_1000195583" description="Large ribosomal subunit protein uL11">
    <location>
        <begin position="1"/>
        <end position="141"/>
    </location>
</feature>
<gene>
    <name evidence="1" type="primary">rplK</name>
    <name type="ordered locus">BCA_0125</name>
</gene>
<protein>
    <recommendedName>
        <fullName evidence="1">Large ribosomal subunit protein uL11</fullName>
    </recommendedName>
    <alternativeName>
        <fullName evidence="2">50S ribosomal protein L11</fullName>
    </alternativeName>
</protein>